<proteinExistence type="predicted"/>
<sequence>MNNIPPIPQLGIYVSKIDPTLRITVTDVDIVDGEDDSPDDELFYLVHWIEGEDESDMTAMGFELDPVEWQAFVESEQLVFERESVHGFNPRKFKLGKDSGFSHED</sequence>
<name>YR7G_ECOLX</name>
<protein>
    <recommendedName>
        <fullName evidence="1">Protein ORFg in retron Ec67</fullName>
    </recommendedName>
</protein>
<dbReference type="EMBL" id="M55249">
    <property type="protein sequence ID" value="AAA23402.1"/>
    <property type="molecule type" value="Genomic_DNA"/>
</dbReference>
<dbReference type="PIR" id="JQ0862">
    <property type="entry name" value="JQ0862"/>
</dbReference>
<feature type="chain" id="PRO_0000066459" description="Protein ORFg in retron Ec67">
    <location>
        <begin position="1"/>
        <end position="105"/>
    </location>
</feature>
<evidence type="ECO:0000303" key="1">
    <source>
    </source>
</evidence>
<organism>
    <name type="scientific">Escherichia coli</name>
    <dbReference type="NCBI Taxonomy" id="562"/>
    <lineage>
        <taxon>Bacteria</taxon>
        <taxon>Pseudomonadati</taxon>
        <taxon>Pseudomonadota</taxon>
        <taxon>Gammaproteobacteria</taxon>
        <taxon>Enterobacterales</taxon>
        <taxon>Enterobacteriaceae</taxon>
        <taxon>Escherichia</taxon>
    </lineage>
</organism>
<keyword id="KW-0814">Transposable element</keyword>
<accession>P21321</accession>
<reference key="1">
    <citation type="journal article" date="1990" name="Proc. Natl. Acad. Sci. U.S.A.">
        <title>Retron for the 67-base multicopy single-stranded DNA from Escherichia coli: a potential transposable element encoding both reverse transcriptase and Dam methylase functions.</title>
        <authorList>
            <person name="Hsu M.-Y."/>
            <person name="Inouye M."/>
            <person name="Inouye S."/>
        </authorList>
    </citation>
    <scope>NUCLEOTIDE SEQUENCE [GENOMIC DNA]</scope>
    <source>
        <strain>O1:NM / CL-1</strain>
    </source>
</reference>